<name>GASA2_ARATH</name>
<gene>
    <name type="primary">GASA2</name>
    <name type="ordered locus">At4g09610</name>
    <name type="ORF">T25P22.50</name>
</gene>
<organism>
    <name type="scientific">Arabidopsis thaliana</name>
    <name type="common">Mouse-ear cress</name>
    <dbReference type="NCBI Taxonomy" id="3702"/>
    <lineage>
        <taxon>Eukaryota</taxon>
        <taxon>Viridiplantae</taxon>
        <taxon>Streptophyta</taxon>
        <taxon>Embryophyta</taxon>
        <taxon>Tracheophyta</taxon>
        <taxon>Spermatophyta</taxon>
        <taxon>Magnoliopsida</taxon>
        <taxon>eudicotyledons</taxon>
        <taxon>Gunneridae</taxon>
        <taxon>Pentapetalae</taxon>
        <taxon>rosids</taxon>
        <taxon>malvids</taxon>
        <taxon>Brassicales</taxon>
        <taxon>Brassicaceae</taxon>
        <taxon>Camelineae</taxon>
        <taxon>Arabidopsis</taxon>
    </lineage>
</organism>
<keyword id="KW-1015">Disulfide bond</keyword>
<keyword id="KW-0939">Gibberellin signaling pathway</keyword>
<keyword id="KW-1185">Reference proteome</keyword>
<keyword id="KW-0964">Secreted</keyword>
<keyword id="KW-0732">Signal</keyword>
<dbReference type="EMBL" id="U11765">
    <property type="protein sequence ID" value="AAB06309.1"/>
    <property type="molecule type" value="mRNA"/>
</dbReference>
<dbReference type="EMBL" id="AL161515">
    <property type="protein sequence ID" value="CAB78084.1"/>
    <property type="molecule type" value="Genomic_DNA"/>
</dbReference>
<dbReference type="EMBL" id="AL161831">
    <property type="protein sequence ID" value="CAB82128.1"/>
    <property type="molecule type" value="Genomic_DNA"/>
</dbReference>
<dbReference type="EMBL" id="CP002687">
    <property type="protein sequence ID" value="AEE82771.1"/>
    <property type="molecule type" value="Genomic_DNA"/>
</dbReference>
<dbReference type="PIR" id="S60230">
    <property type="entry name" value="S60230"/>
</dbReference>
<dbReference type="RefSeq" id="NP_192699.1">
    <property type="nucleotide sequence ID" value="NM_117029.2"/>
</dbReference>
<dbReference type="SMR" id="P46688"/>
<dbReference type="STRING" id="3702.P46688"/>
<dbReference type="PaxDb" id="3702-AT4G09610.1"/>
<dbReference type="EnsemblPlants" id="AT4G09610.1">
    <property type="protein sequence ID" value="AT4G09610.1"/>
    <property type="gene ID" value="AT4G09610"/>
</dbReference>
<dbReference type="GeneID" id="826546"/>
<dbReference type="Gramene" id="AT4G09610.1">
    <property type="protein sequence ID" value="AT4G09610.1"/>
    <property type="gene ID" value="AT4G09610"/>
</dbReference>
<dbReference type="KEGG" id="ath:AT4G09610"/>
<dbReference type="Araport" id="AT4G09610"/>
<dbReference type="TAIR" id="AT4G09610">
    <property type="gene designation" value="GASA2"/>
</dbReference>
<dbReference type="eggNOG" id="ENOG502SAJ5">
    <property type="taxonomic scope" value="Eukaryota"/>
</dbReference>
<dbReference type="HOGENOM" id="CLU_142643_5_1_1"/>
<dbReference type="InParanoid" id="P46688"/>
<dbReference type="OMA" id="EDICPCY"/>
<dbReference type="OrthoDB" id="625265at2759"/>
<dbReference type="PhylomeDB" id="P46688"/>
<dbReference type="PRO" id="PR:P46688"/>
<dbReference type="Proteomes" id="UP000006548">
    <property type="component" value="Chromosome 4"/>
</dbReference>
<dbReference type="ExpressionAtlas" id="P46688">
    <property type="expression patterns" value="baseline and differential"/>
</dbReference>
<dbReference type="GO" id="GO:0005576">
    <property type="term" value="C:extracellular region"/>
    <property type="evidence" value="ECO:0007669"/>
    <property type="project" value="UniProtKB-SubCell"/>
</dbReference>
<dbReference type="GO" id="GO:0009740">
    <property type="term" value="P:gibberellic acid mediated signaling pathway"/>
    <property type="evidence" value="ECO:0007669"/>
    <property type="project" value="UniProtKB-KW"/>
</dbReference>
<dbReference type="InterPro" id="IPR003854">
    <property type="entry name" value="GASA"/>
</dbReference>
<dbReference type="PANTHER" id="PTHR23201">
    <property type="entry name" value="EXTENSIN, PROLINE-RICH PROTEIN"/>
    <property type="match status" value="1"/>
</dbReference>
<dbReference type="PANTHER" id="PTHR23201:SF18">
    <property type="entry name" value="GIBBERELLIN-REGULATED PROTEIN 2-RELATED"/>
    <property type="match status" value="1"/>
</dbReference>
<dbReference type="Pfam" id="PF02704">
    <property type="entry name" value="GASA"/>
    <property type="match status" value="1"/>
</dbReference>
<accession>P46688</accession>
<comment type="function">
    <text>Gibberellin-regulated protein that may function in hormonal controlled steps of development such as seed germination, flowering and seed maturation.</text>
</comment>
<comment type="subcellular location">
    <subcellularLocation>
        <location>Secreted</location>
    </subcellularLocation>
</comment>
<comment type="tissue specificity">
    <text>Dry seeds and maturating siliques.</text>
</comment>
<comment type="PTM">
    <text>Six disulfide bonds may be present.</text>
</comment>
<comment type="similarity">
    <text evidence="2">Belongs to the GASA family.</text>
</comment>
<sequence length="99" mass="10531">MAVFRSTLVLLLIIVCLTTYELHVHAADGAKVGEGVVKIDCGGRCKDRCSKSSRTKLCLRACNSCCSRCNCVPPGTSGNTHLCPCYASITTHGGRLKCP</sequence>
<evidence type="ECO:0000255" key="1"/>
<evidence type="ECO:0000305" key="2"/>
<reference key="1">
    <citation type="journal article" date="1995" name="Plant Mol. Biol.">
        <title>GASA, a gibberellin-regulated gene family from Arabidopsis thaliana related to the tomato GAST1 gene.</title>
        <authorList>
            <person name="Herzog M."/>
            <person name="Dorne A.-M."/>
            <person name="Grellet F."/>
        </authorList>
    </citation>
    <scope>NUCLEOTIDE SEQUENCE [MRNA]</scope>
    <source>
        <strain>cv. Columbia</strain>
        <tissue>Seed</tissue>
    </source>
</reference>
<reference key="2">
    <citation type="journal article" date="1999" name="Nature">
        <title>Sequence and analysis of chromosome 4 of the plant Arabidopsis thaliana.</title>
        <authorList>
            <person name="Mayer K.F.X."/>
            <person name="Schueller C."/>
            <person name="Wambutt R."/>
            <person name="Murphy G."/>
            <person name="Volckaert G."/>
            <person name="Pohl T."/>
            <person name="Duesterhoeft A."/>
            <person name="Stiekema W."/>
            <person name="Entian K.-D."/>
            <person name="Terryn N."/>
            <person name="Harris B."/>
            <person name="Ansorge W."/>
            <person name="Brandt P."/>
            <person name="Grivell L.A."/>
            <person name="Rieger M."/>
            <person name="Weichselgartner M."/>
            <person name="de Simone V."/>
            <person name="Obermaier B."/>
            <person name="Mache R."/>
            <person name="Mueller M."/>
            <person name="Kreis M."/>
            <person name="Delseny M."/>
            <person name="Puigdomenech P."/>
            <person name="Watson M."/>
            <person name="Schmidtheini T."/>
            <person name="Reichert B."/>
            <person name="Portetelle D."/>
            <person name="Perez-Alonso M."/>
            <person name="Boutry M."/>
            <person name="Bancroft I."/>
            <person name="Vos P."/>
            <person name="Hoheisel J."/>
            <person name="Zimmermann W."/>
            <person name="Wedler H."/>
            <person name="Ridley P."/>
            <person name="Langham S.-A."/>
            <person name="McCullagh B."/>
            <person name="Bilham L."/>
            <person name="Robben J."/>
            <person name="van der Schueren J."/>
            <person name="Grymonprez B."/>
            <person name="Chuang Y.-J."/>
            <person name="Vandenbussche F."/>
            <person name="Braeken M."/>
            <person name="Weltjens I."/>
            <person name="Voet M."/>
            <person name="Bastiaens I."/>
            <person name="Aert R."/>
            <person name="Defoor E."/>
            <person name="Weitzenegger T."/>
            <person name="Bothe G."/>
            <person name="Ramsperger U."/>
            <person name="Hilbert H."/>
            <person name="Braun M."/>
            <person name="Holzer E."/>
            <person name="Brandt A."/>
            <person name="Peters S."/>
            <person name="van Staveren M."/>
            <person name="Dirkse W."/>
            <person name="Mooijman P."/>
            <person name="Klein Lankhorst R."/>
            <person name="Rose M."/>
            <person name="Hauf J."/>
            <person name="Koetter P."/>
            <person name="Berneiser S."/>
            <person name="Hempel S."/>
            <person name="Feldpausch M."/>
            <person name="Lamberth S."/>
            <person name="Van den Daele H."/>
            <person name="De Keyser A."/>
            <person name="Buysshaert C."/>
            <person name="Gielen J."/>
            <person name="Villarroel R."/>
            <person name="De Clercq R."/>
            <person name="van Montagu M."/>
            <person name="Rogers J."/>
            <person name="Cronin A."/>
            <person name="Quail M.A."/>
            <person name="Bray-Allen S."/>
            <person name="Clark L."/>
            <person name="Doggett J."/>
            <person name="Hall S."/>
            <person name="Kay M."/>
            <person name="Lennard N."/>
            <person name="McLay K."/>
            <person name="Mayes R."/>
            <person name="Pettett A."/>
            <person name="Rajandream M.A."/>
            <person name="Lyne M."/>
            <person name="Benes V."/>
            <person name="Rechmann S."/>
            <person name="Borkova D."/>
            <person name="Bloecker H."/>
            <person name="Scharfe M."/>
            <person name="Grimm M."/>
            <person name="Loehnert T.-H."/>
            <person name="Dose S."/>
            <person name="de Haan M."/>
            <person name="Maarse A.C."/>
            <person name="Schaefer M."/>
            <person name="Mueller-Auer S."/>
            <person name="Gabel C."/>
            <person name="Fuchs M."/>
            <person name="Fartmann B."/>
            <person name="Granderath K."/>
            <person name="Dauner D."/>
            <person name="Herzl A."/>
            <person name="Neumann S."/>
            <person name="Argiriou A."/>
            <person name="Vitale D."/>
            <person name="Liguori R."/>
            <person name="Piravandi E."/>
            <person name="Massenet O."/>
            <person name="Quigley F."/>
            <person name="Clabauld G."/>
            <person name="Muendlein A."/>
            <person name="Felber R."/>
            <person name="Schnabl S."/>
            <person name="Hiller R."/>
            <person name="Schmidt W."/>
            <person name="Lecharny A."/>
            <person name="Aubourg S."/>
            <person name="Chefdor F."/>
            <person name="Cooke R."/>
            <person name="Berger C."/>
            <person name="Monfort A."/>
            <person name="Casacuberta E."/>
            <person name="Gibbons T."/>
            <person name="Weber N."/>
            <person name="Vandenbol M."/>
            <person name="Bargues M."/>
            <person name="Terol J."/>
            <person name="Torres A."/>
            <person name="Perez-Perez A."/>
            <person name="Purnelle B."/>
            <person name="Bent E."/>
            <person name="Johnson S."/>
            <person name="Tacon D."/>
            <person name="Jesse T."/>
            <person name="Heijnen L."/>
            <person name="Schwarz S."/>
            <person name="Scholler P."/>
            <person name="Heber S."/>
            <person name="Francs P."/>
            <person name="Bielke C."/>
            <person name="Frishman D."/>
            <person name="Haase D."/>
            <person name="Lemcke K."/>
            <person name="Mewes H.-W."/>
            <person name="Stocker S."/>
            <person name="Zaccaria P."/>
            <person name="Bevan M."/>
            <person name="Wilson R.K."/>
            <person name="de la Bastide M."/>
            <person name="Habermann K."/>
            <person name="Parnell L."/>
            <person name="Dedhia N."/>
            <person name="Gnoj L."/>
            <person name="Schutz K."/>
            <person name="Huang E."/>
            <person name="Spiegel L."/>
            <person name="Sekhon M."/>
            <person name="Murray J."/>
            <person name="Sheet P."/>
            <person name="Cordes M."/>
            <person name="Abu-Threideh J."/>
            <person name="Stoneking T."/>
            <person name="Kalicki J."/>
            <person name="Graves T."/>
            <person name="Harmon G."/>
            <person name="Edwards J."/>
            <person name="Latreille P."/>
            <person name="Courtney L."/>
            <person name="Cloud J."/>
            <person name="Abbott A."/>
            <person name="Scott K."/>
            <person name="Johnson D."/>
            <person name="Minx P."/>
            <person name="Bentley D."/>
            <person name="Fulton B."/>
            <person name="Miller N."/>
            <person name="Greco T."/>
            <person name="Kemp K."/>
            <person name="Kramer J."/>
            <person name="Fulton L."/>
            <person name="Mardis E."/>
            <person name="Dante M."/>
            <person name="Pepin K."/>
            <person name="Hillier L.W."/>
            <person name="Nelson J."/>
            <person name="Spieth J."/>
            <person name="Ryan E."/>
            <person name="Andrews S."/>
            <person name="Geisel C."/>
            <person name="Layman D."/>
            <person name="Du H."/>
            <person name="Ali J."/>
            <person name="Berghoff A."/>
            <person name="Jones K."/>
            <person name="Drone K."/>
            <person name="Cotton M."/>
            <person name="Joshu C."/>
            <person name="Antonoiu B."/>
            <person name="Zidanic M."/>
            <person name="Strong C."/>
            <person name="Sun H."/>
            <person name="Lamar B."/>
            <person name="Yordan C."/>
            <person name="Ma P."/>
            <person name="Zhong J."/>
            <person name="Preston R."/>
            <person name="Vil D."/>
            <person name="Shekher M."/>
            <person name="Matero A."/>
            <person name="Shah R."/>
            <person name="Swaby I.K."/>
            <person name="O'Shaughnessy A."/>
            <person name="Rodriguez M."/>
            <person name="Hoffman J."/>
            <person name="Till S."/>
            <person name="Granat S."/>
            <person name="Shohdy N."/>
            <person name="Hasegawa A."/>
            <person name="Hameed A."/>
            <person name="Lodhi M."/>
            <person name="Johnson A."/>
            <person name="Chen E."/>
            <person name="Marra M.A."/>
            <person name="Martienssen R."/>
            <person name="McCombie W.R."/>
        </authorList>
    </citation>
    <scope>NUCLEOTIDE SEQUENCE [LARGE SCALE GENOMIC DNA]</scope>
    <source>
        <strain>cv. Columbia</strain>
    </source>
</reference>
<reference key="3">
    <citation type="journal article" date="2017" name="Plant J.">
        <title>Araport11: a complete reannotation of the Arabidopsis thaliana reference genome.</title>
        <authorList>
            <person name="Cheng C.Y."/>
            <person name="Krishnakumar V."/>
            <person name="Chan A.P."/>
            <person name="Thibaud-Nissen F."/>
            <person name="Schobel S."/>
            <person name="Town C.D."/>
        </authorList>
    </citation>
    <scope>GENOME REANNOTATION</scope>
    <source>
        <strain>cv. Columbia</strain>
    </source>
</reference>
<proteinExistence type="evidence at transcript level"/>
<protein>
    <recommendedName>
        <fullName>Gibberellin-regulated protein 2</fullName>
    </recommendedName>
    <alternativeName>
        <fullName>GAST1 protein homolog 2</fullName>
    </alternativeName>
</protein>
<feature type="signal peptide" evidence="1">
    <location>
        <begin position="1"/>
        <end position="26"/>
    </location>
</feature>
<feature type="chain" id="PRO_0000021323" description="Gibberellin-regulated protein 2">
    <location>
        <begin position="27"/>
        <end position="99"/>
    </location>
</feature>